<gene>
    <name type="ORF">DDB_G0277331</name>
</gene>
<feature type="chain" id="PRO_0000389435" description="SET and MYND domain-containing protein DDB_G0277331">
    <location>
        <begin position="1"/>
        <end position="549"/>
    </location>
</feature>
<feature type="domain" description="SET" evidence="4">
    <location>
        <begin position="27"/>
        <end position="283"/>
    </location>
</feature>
<feature type="zinc finger region" description="MYND-type" evidence="3">
    <location>
        <begin position="71"/>
        <end position="115"/>
    </location>
</feature>
<feature type="coiled-coil region" evidence="2">
    <location>
        <begin position="340"/>
        <end position="401"/>
    </location>
</feature>
<feature type="binding site" evidence="3">
    <location>
        <position position="71"/>
    </location>
    <ligand>
        <name>Zn(2+)</name>
        <dbReference type="ChEBI" id="CHEBI:29105"/>
        <label>1</label>
    </ligand>
</feature>
<feature type="binding site" evidence="3">
    <location>
        <position position="74"/>
    </location>
    <ligand>
        <name>Zn(2+)</name>
        <dbReference type="ChEBI" id="CHEBI:29105"/>
        <label>1</label>
    </ligand>
</feature>
<feature type="binding site" evidence="3">
    <location>
        <position position="90"/>
    </location>
    <ligand>
        <name>Zn(2+)</name>
        <dbReference type="ChEBI" id="CHEBI:29105"/>
        <label>2</label>
    </ligand>
</feature>
<feature type="binding site" evidence="3">
    <location>
        <position position="93"/>
    </location>
    <ligand>
        <name>Zn(2+)</name>
        <dbReference type="ChEBI" id="CHEBI:29105"/>
        <label>2</label>
    </ligand>
</feature>
<feature type="binding site" evidence="3">
    <location>
        <position position="99"/>
    </location>
    <ligand>
        <name>Zn(2+)</name>
        <dbReference type="ChEBI" id="CHEBI:29105"/>
        <label>1</label>
    </ligand>
</feature>
<feature type="binding site" evidence="3">
    <location>
        <position position="103"/>
    </location>
    <ligand>
        <name>Zn(2+)</name>
        <dbReference type="ChEBI" id="CHEBI:29105"/>
        <label>1</label>
    </ligand>
</feature>
<feature type="binding site" evidence="3">
    <location>
        <position position="111"/>
    </location>
    <ligand>
        <name>Zn(2+)</name>
        <dbReference type="ChEBI" id="CHEBI:29105"/>
        <label>2</label>
    </ligand>
</feature>
<feature type="binding site" evidence="3">
    <location>
        <position position="115"/>
    </location>
    <ligand>
        <name>Zn(2+)</name>
        <dbReference type="ChEBI" id="CHEBI:29105"/>
        <label>2</label>
    </ligand>
</feature>
<evidence type="ECO:0000250" key="1"/>
<evidence type="ECO:0000255" key="2"/>
<evidence type="ECO:0000255" key="3">
    <source>
        <dbReference type="PROSITE-ProRule" id="PRU00134"/>
    </source>
</evidence>
<evidence type="ECO:0000255" key="4">
    <source>
        <dbReference type="PROSITE-ProRule" id="PRU00190"/>
    </source>
</evidence>
<comment type="function">
    <text evidence="1">Probable methyltransferase.</text>
</comment>
<comment type="similarity">
    <text evidence="4">Belongs to the class V-like SAM-binding methyltransferase superfamily.</text>
</comment>
<proteinExistence type="inferred from homology"/>
<name>Y7331_DICDI</name>
<keyword id="KW-0175">Coiled coil</keyword>
<keyword id="KW-0479">Metal-binding</keyword>
<keyword id="KW-0489">Methyltransferase</keyword>
<keyword id="KW-1185">Reference proteome</keyword>
<keyword id="KW-0949">S-adenosyl-L-methionine</keyword>
<keyword id="KW-0808">Transferase</keyword>
<keyword id="KW-0862">Zinc</keyword>
<keyword id="KW-0863">Zinc-finger</keyword>
<reference key="1">
    <citation type="journal article" date="2002" name="Nature">
        <title>Sequence and analysis of chromosome 2 of Dictyostelium discoideum.</title>
        <authorList>
            <person name="Gloeckner G."/>
            <person name="Eichinger L."/>
            <person name="Szafranski K."/>
            <person name="Pachebat J.A."/>
            <person name="Bankier A.T."/>
            <person name="Dear P.H."/>
            <person name="Lehmann R."/>
            <person name="Baumgart C."/>
            <person name="Parra G."/>
            <person name="Abril J.F."/>
            <person name="Guigo R."/>
            <person name="Kumpf K."/>
            <person name="Tunggal B."/>
            <person name="Cox E.C."/>
            <person name="Quail M.A."/>
            <person name="Platzer M."/>
            <person name="Rosenthal A."/>
            <person name="Noegel A.A."/>
        </authorList>
    </citation>
    <scope>NUCLEOTIDE SEQUENCE [LARGE SCALE GENOMIC DNA]</scope>
    <source>
        <strain>AX4</strain>
    </source>
</reference>
<reference key="2">
    <citation type="journal article" date="2005" name="Nature">
        <title>The genome of the social amoeba Dictyostelium discoideum.</title>
        <authorList>
            <person name="Eichinger L."/>
            <person name="Pachebat J.A."/>
            <person name="Gloeckner G."/>
            <person name="Rajandream M.A."/>
            <person name="Sucgang R."/>
            <person name="Berriman M."/>
            <person name="Song J."/>
            <person name="Olsen R."/>
            <person name="Szafranski K."/>
            <person name="Xu Q."/>
            <person name="Tunggal B."/>
            <person name="Kummerfeld S."/>
            <person name="Madera M."/>
            <person name="Konfortov B.A."/>
            <person name="Rivero F."/>
            <person name="Bankier A.T."/>
            <person name="Lehmann R."/>
            <person name="Hamlin N."/>
            <person name="Davies R."/>
            <person name="Gaudet P."/>
            <person name="Fey P."/>
            <person name="Pilcher K."/>
            <person name="Chen G."/>
            <person name="Saunders D."/>
            <person name="Sodergren E.J."/>
            <person name="Davis P."/>
            <person name="Kerhornou A."/>
            <person name="Nie X."/>
            <person name="Hall N."/>
            <person name="Anjard C."/>
            <person name="Hemphill L."/>
            <person name="Bason N."/>
            <person name="Farbrother P."/>
            <person name="Desany B."/>
            <person name="Just E."/>
            <person name="Morio T."/>
            <person name="Rost R."/>
            <person name="Churcher C.M."/>
            <person name="Cooper J."/>
            <person name="Haydock S."/>
            <person name="van Driessche N."/>
            <person name="Cronin A."/>
            <person name="Goodhead I."/>
            <person name="Muzny D.M."/>
            <person name="Mourier T."/>
            <person name="Pain A."/>
            <person name="Lu M."/>
            <person name="Harper D."/>
            <person name="Lindsay R."/>
            <person name="Hauser H."/>
            <person name="James K.D."/>
            <person name="Quiles M."/>
            <person name="Madan Babu M."/>
            <person name="Saito T."/>
            <person name="Buchrieser C."/>
            <person name="Wardroper A."/>
            <person name="Felder M."/>
            <person name="Thangavelu M."/>
            <person name="Johnson D."/>
            <person name="Knights A."/>
            <person name="Loulseged H."/>
            <person name="Mungall K.L."/>
            <person name="Oliver K."/>
            <person name="Price C."/>
            <person name="Quail M.A."/>
            <person name="Urushihara H."/>
            <person name="Hernandez J."/>
            <person name="Rabbinowitsch E."/>
            <person name="Steffen D."/>
            <person name="Sanders M."/>
            <person name="Ma J."/>
            <person name="Kohara Y."/>
            <person name="Sharp S."/>
            <person name="Simmonds M.N."/>
            <person name="Spiegler S."/>
            <person name="Tivey A."/>
            <person name="Sugano S."/>
            <person name="White B."/>
            <person name="Walker D."/>
            <person name="Woodward J.R."/>
            <person name="Winckler T."/>
            <person name="Tanaka Y."/>
            <person name="Shaulsky G."/>
            <person name="Schleicher M."/>
            <person name="Weinstock G.M."/>
            <person name="Rosenthal A."/>
            <person name="Cox E.C."/>
            <person name="Chisholm R.L."/>
            <person name="Gibbs R.A."/>
            <person name="Loomis W.F."/>
            <person name="Platzer M."/>
            <person name="Kay R.R."/>
            <person name="Williams J.G."/>
            <person name="Dear P.H."/>
            <person name="Noegel A.A."/>
            <person name="Barrell B.G."/>
            <person name="Kuspa A."/>
        </authorList>
    </citation>
    <scope>NUCLEOTIDE SEQUENCE [LARGE SCALE GENOMIC DNA]</scope>
    <source>
        <strain>AX4</strain>
    </source>
</reference>
<dbReference type="EC" id="2.1.1.-"/>
<dbReference type="EMBL" id="AAFI02000019">
    <property type="protein sequence ID" value="EAL68852.1"/>
    <property type="molecule type" value="Genomic_DNA"/>
</dbReference>
<dbReference type="RefSeq" id="XP_642738.1">
    <property type="nucleotide sequence ID" value="XM_637646.1"/>
</dbReference>
<dbReference type="SMR" id="Q54ZX8"/>
<dbReference type="FunCoup" id="Q54ZX8">
    <property type="interactions" value="177"/>
</dbReference>
<dbReference type="PaxDb" id="44689-DDB0220710"/>
<dbReference type="EnsemblProtists" id="EAL68852">
    <property type="protein sequence ID" value="EAL68852"/>
    <property type="gene ID" value="DDB_G0277331"/>
</dbReference>
<dbReference type="GeneID" id="8620931"/>
<dbReference type="KEGG" id="ddi:DDB_G0277331"/>
<dbReference type="dictyBase" id="DDB_G0277331"/>
<dbReference type="VEuPathDB" id="AmoebaDB:DDB_G0277331"/>
<dbReference type="eggNOG" id="KOG2084">
    <property type="taxonomic scope" value="Eukaryota"/>
</dbReference>
<dbReference type="HOGENOM" id="CLU_496478_0_0_1"/>
<dbReference type="InParanoid" id="Q54ZX8"/>
<dbReference type="OMA" id="PNCITIP"/>
<dbReference type="PhylomeDB" id="Q54ZX8"/>
<dbReference type="Reactome" id="R-DDI-3214841">
    <property type="pathway name" value="PKMTs methylate histone lysines"/>
</dbReference>
<dbReference type="PRO" id="PR:Q54ZX8"/>
<dbReference type="Proteomes" id="UP000002195">
    <property type="component" value="Chromosome 2"/>
</dbReference>
<dbReference type="GO" id="GO:0005634">
    <property type="term" value="C:nucleus"/>
    <property type="evidence" value="ECO:0000318"/>
    <property type="project" value="GO_Central"/>
</dbReference>
<dbReference type="GO" id="GO:0008168">
    <property type="term" value="F:methyltransferase activity"/>
    <property type="evidence" value="ECO:0007669"/>
    <property type="project" value="UniProtKB-KW"/>
</dbReference>
<dbReference type="GO" id="GO:0008270">
    <property type="term" value="F:zinc ion binding"/>
    <property type="evidence" value="ECO:0007669"/>
    <property type="project" value="UniProtKB-KW"/>
</dbReference>
<dbReference type="GO" id="GO:0032259">
    <property type="term" value="P:methylation"/>
    <property type="evidence" value="ECO:0007669"/>
    <property type="project" value="UniProtKB-KW"/>
</dbReference>
<dbReference type="CDD" id="cd20071">
    <property type="entry name" value="SET_SMYD"/>
    <property type="match status" value="1"/>
</dbReference>
<dbReference type="Gene3D" id="1.10.220.160">
    <property type="match status" value="1"/>
</dbReference>
<dbReference type="Gene3D" id="6.10.140.2220">
    <property type="match status" value="1"/>
</dbReference>
<dbReference type="Gene3D" id="2.170.270.10">
    <property type="entry name" value="SET domain"/>
    <property type="match status" value="1"/>
</dbReference>
<dbReference type="InterPro" id="IPR050869">
    <property type="entry name" value="H3K4_H4K5_MeTrfase"/>
</dbReference>
<dbReference type="InterPro" id="IPR001214">
    <property type="entry name" value="SET_dom"/>
</dbReference>
<dbReference type="InterPro" id="IPR046341">
    <property type="entry name" value="SET_dom_sf"/>
</dbReference>
<dbReference type="InterPro" id="IPR002893">
    <property type="entry name" value="Znf_MYND"/>
</dbReference>
<dbReference type="PANTHER" id="PTHR12197">
    <property type="entry name" value="HISTONE-LYSINE N-METHYLTRANSFERASE SMYD"/>
    <property type="match status" value="1"/>
</dbReference>
<dbReference type="PANTHER" id="PTHR12197:SF291">
    <property type="entry name" value="SET AND MYND DOMAIN-CONTAINING PROTEIN DDB_G0277331"/>
    <property type="match status" value="1"/>
</dbReference>
<dbReference type="Pfam" id="PF00856">
    <property type="entry name" value="SET"/>
    <property type="match status" value="1"/>
</dbReference>
<dbReference type="Pfam" id="PF01753">
    <property type="entry name" value="zf-MYND"/>
    <property type="match status" value="1"/>
</dbReference>
<dbReference type="SMART" id="SM00317">
    <property type="entry name" value="SET"/>
    <property type="match status" value="1"/>
</dbReference>
<dbReference type="SUPFAM" id="SSF82199">
    <property type="entry name" value="SET domain"/>
    <property type="match status" value="1"/>
</dbReference>
<dbReference type="PROSITE" id="PS50280">
    <property type="entry name" value="SET"/>
    <property type="match status" value="1"/>
</dbReference>
<dbReference type="PROSITE" id="PS01360">
    <property type="entry name" value="ZF_MYND_1"/>
    <property type="match status" value="1"/>
</dbReference>
<dbReference type="PROSITE" id="PS50865">
    <property type="entry name" value="ZF_MYND_2"/>
    <property type="match status" value="1"/>
</dbReference>
<organism>
    <name type="scientific">Dictyostelium discoideum</name>
    <name type="common">Social amoeba</name>
    <dbReference type="NCBI Taxonomy" id="44689"/>
    <lineage>
        <taxon>Eukaryota</taxon>
        <taxon>Amoebozoa</taxon>
        <taxon>Evosea</taxon>
        <taxon>Eumycetozoa</taxon>
        <taxon>Dictyostelia</taxon>
        <taxon>Dictyosteliales</taxon>
        <taxon>Dictyosteliaceae</taxon>
        <taxon>Dictyostelium</taxon>
    </lineage>
</organism>
<accession>Q54ZX8</accession>
<sequence length="549" mass="64279">MIPNNINNRKKLKLPELFKEKYGFNKKGIELRYCDGEKGMGIFSNRKFNKGEKIMKIEPYVWSVAKHAIVCDECLKNKLDLEEGKTLKRCSNCKLVYYCSTDCQTKAWKIHKQECKILSTIPSTTDKKNINTKSTTMLLRLFIKRNLELINNNNNNNNNNNNNNNNNDNHITGQYEIIDGLLNHKDIRSDNNEYKSFSSGFCSLLGEDPQLKAPIVLEYLLKLEPNCITIPRCEASSIGLYPLMLFFNHSCKPNISIINNRKELLIITNKIIEKDEELFINYSPAICYRNERLDNLKQCFFFNCKCTLCLGEEKIKSKDLYITCNINNCGGRINQEIDININNNNNNNNNNNNNSNNNNNNNNSNEEILKCYKCLKVYKGQEKDEILKKKLIIKNLQNKLSTNTDQININQEFKSLLELYCKEIHPTDPLFYEIVNKTQLFYLGNNNKFISDNELSTIYHPRYQIMIKYHLLQVQNLEYEYCRQMLDYVNTLATTSYFKDALNILTDLMSNHLSQIDFYGFNRDELLSLLYNLQHEYKNNIKTSRKIIN</sequence>
<protein>
    <recommendedName>
        <fullName>SET and MYND domain-containing protein DDB_G0277331</fullName>
        <ecNumber>2.1.1.-</ecNumber>
    </recommendedName>
</protein>